<sequence>MSDVLSNDLMQKMDAYWRAANYLSVGQIYLQDNPLLEQPLQLEHIKPRLLGHWGTTPGLNLLYVHLNRLITEHDLDMIYIIGPGHGGPGLVANSYLEGSYTERYPAIERNRNGLQRLFRQFSWPHGVPSHVSPETPGSIHEGGELGYSLAHAYGAAFDNPDLIVACIVGDGEAETGALATSWHSNKFLNPARDGAVLPILHLNGFKIANPTVLARISRQELTDLMRGYGYEPIVVEGDEPALVHHALAAALDRALADIQAIQAAARHQGVTARPRWPMIILRTPKGWTGPKQVDGKQVEGTWRAHQVPIADFKDPAHVQLLETWLRSYRPEELFDANGKFRDELAALAPTGHCRMSANPHANGGELLQPLSLPDFRNYAVALSAPGAAKAEATRALGTFLRDVMRDNLETKNFRLFGPDETASNRLDGVLEVTDKQWMADIEDVDIALGPDGRVMEVLSEHLCQGWLEGYLLTGRHGLFSCYEAFIHIIDSMFNQHAKWLKACDAIPWRRPIASLNYLLTSHVWRQDHNGFSHQDPGFIDHVVNKKASVVRVYLPPDANCLLSVADHCLRSRNYVNLIVAGKQPEWQWLDIDAAVRHCTAGAGIWHWASNDDGDPDVVMACAGDVPTVETLAAVMLLREYVPDIRIRVVNVVDLMVLQPSSEHPHGLDDRRFDELFTVDKPVVFAFHGYPWLIHRLTYRRRNHFNIHVRGYKEEGSTTTPFDMVVLNDLDRYRLALDAIRRIPRLAGQVESATDRYWATMQRHKLYIGEHGDDMPEIRDWRWQA</sequence>
<reference key="1">
    <citation type="submission" date="2006-01" db="EMBL/GenBank/DDBJ databases">
        <title>Complete sequence of Rhodopseudomonas palustris HaA2.</title>
        <authorList>
            <consortium name="US DOE Joint Genome Institute"/>
            <person name="Copeland A."/>
            <person name="Lucas S."/>
            <person name="Lapidus A."/>
            <person name="Barry K."/>
            <person name="Detter J.C."/>
            <person name="Glavina T."/>
            <person name="Hammon N."/>
            <person name="Israni S."/>
            <person name="Pitluck S."/>
            <person name="Chain P."/>
            <person name="Malfatti S."/>
            <person name="Shin M."/>
            <person name="Vergez L."/>
            <person name="Schmutz J."/>
            <person name="Larimer F."/>
            <person name="Land M."/>
            <person name="Hauser L."/>
            <person name="Pelletier D.A."/>
            <person name="Kyrpides N."/>
            <person name="Anderson I."/>
            <person name="Oda Y."/>
            <person name="Harwood C.S."/>
            <person name="Richardson P."/>
        </authorList>
    </citation>
    <scope>NUCLEOTIDE SEQUENCE [LARGE SCALE GENOMIC DNA]</scope>
    <source>
        <strain>HaA2</strain>
    </source>
</reference>
<feature type="chain" id="PRO_1000145456" description="Probable phosphoketolase">
    <location>
        <begin position="1"/>
        <end position="784"/>
    </location>
</feature>
<evidence type="ECO:0000255" key="1">
    <source>
        <dbReference type="HAMAP-Rule" id="MF_01403"/>
    </source>
</evidence>
<protein>
    <recommendedName>
        <fullName evidence="1">Probable phosphoketolase</fullName>
        <ecNumber evidence="1">4.1.2.-</ecNumber>
    </recommendedName>
</protein>
<keyword id="KW-0456">Lyase</keyword>
<keyword id="KW-1185">Reference proteome</keyword>
<keyword id="KW-0786">Thiamine pyrophosphate</keyword>
<name>PHK_RHOP2</name>
<proteinExistence type="inferred from homology"/>
<gene>
    <name type="ordered locus">RPB_3858</name>
</gene>
<organism>
    <name type="scientific">Rhodopseudomonas palustris (strain HaA2)</name>
    <dbReference type="NCBI Taxonomy" id="316058"/>
    <lineage>
        <taxon>Bacteria</taxon>
        <taxon>Pseudomonadati</taxon>
        <taxon>Pseudomonadota</taxon>
        <taxon>Alphaproteobacteria</taxon>
        <taxon>Hyphomicrobiales</taxon>
        <taxon>Nitrobacteraceae</taxon>
        <taxon>Rhodopseudomonas</taxon>
    </lineage>
</organism>
<comment type="cofactor">
    <cofactor evidence="1">
        <name>thiamine diphosphate</name>
        <dbReference type="ChEBI" id="CHEBI:58937"/>
    </cofactor>
</comment>
<comment type="similarity">
    <text evidence="1">Belongs to the XFP family.</text>
</comment>
<dbReference type="EC" id="4.1.2.-" evidence="1"/>
<dbReference type="EMBL" id="CP000250">
    <property type="protein sequence ID" value="ABD08551.1"/>
    <property type="molecule type" value="Genomic_DNA"/>
</dbReference>
<dbReference type="RefSeq" id="WP_011442735.1">
    <property type="nucleotide sequence ID" value="NC_007778.1"/>
</dbReference>
<dbReference type="SMR" id="Q2ITA9"/>
<dbReference type="STRING" id="316058.RPB_3858"/>
<dbReference type="KEGG" id="rpb:RPB_3858"/>
<dbReference type="eggNOG" id="COG3957">
    <property type="taxonomic scope" value="Bacteria"/>
</dbReference>
<dbReference type="HOGENOM" id="CLU_013954_2_0_5"/>
<dbReference type="OrthoDB" id="9768449at2"/>
<dbReference type="Proteomes" id="UP000008809">
    <property type="component" value="Chromosome"/>
</dbReference>
<dbReference type="GO" id="GO:0016832">
    <property type="term" value="F:aldehyde-lyase activity"/>
    <property type="evidence" value="ECO:0007669"/>
    <property type="project" value="UniProtKB-UniRule"/>
</dbReference>
<dbReference type="GO" id="GO:0005975">
    <property type="term" value="P:carbohydrate metabolic process"/>
    <property type="evidence" value="ECO:0007669"/>
    <property type="project" value="InterPro"/>
</dbReference>
<dbReference type="FunFam" id="3.40.50.970:FF:000091">
    <property type="entry name" value="Xylulose-5-phosphate/fructose-6-phosphate phosphoketolase"/>
    <property type="match status" value="1"/>
</dbReference>
<dbReference type="Gene3D" id="3.40.50.920">
    <property type="match status" value="1"/>
</dbReference>
<dbReference type="Gene3D" id="3.40.50.970">
    <property type="match status" value="2"/>
</dbReference>
<dbReference type="HAMAP" id="MF_01403">
    <property type="entry name" value="Phosphoketolase"/>
    <property type="match status" value="1"/>
</dbReference>
<dbReference type="InterPro" id="IPR023962">
    <property type="entry name" value="Phosphoketolase"/>
</dbReference>
<dbReference type="InterPro" id="IPR029061">
    <property type="entry name" value="THDP-binding"/>
</dbReference>
<dbReference type="InterPro" id="IPR009014">
    <property type="entry name" value="Transketo_C/PFOR_II"/>
</dbReference>
<dbReference type="InterPro" id="IPR005593">
    <property type="entry name" value="Xul5P/Fru6P_PKetolase"/>
</dbReference>
<dbReference type="InterPro" id="IPR018969">
    <property type="entry name" value="Xul5P/Fru6P_PKetolase_C"/>
</dbReference>
<dbReference type="InterPro" id="IPR019790">
    <property type="entry name" value="Xul5P/Fru6P_PKetolase_CS"/>
</dbReference>
<dbReference type="InterPro" id="IPR018970">
    <property type="entry name" value="Xul5P/Fru6P_PKetolase_N"/>
</dbReference>
<dbReference type="InterPro" id="IPR019789">
    <property type="entry name" value="Xul5P/Fru6P_PKetolase_ThDP_BS"/>
</dbReference>
<dbReference type="NCBIfam" id="NF003616">
    <property type="entry name" value="PRK05261.1-1"/>
    <property type="match status" value="1"/>
</dbReference>
<dbReference type="NCBIfam" id="NF003617">
    <property type="entry name" value="PRK05261.1-2"/>
    <property type="match status" value="1"/>
</dbReference>
<dbReference type="NCBIfam" id="NF003619">
    <property type="entry name" value="PRK05261.1-4"/>
    <property type="match status" value="1"/>
</dbReference>
<dbReference type="NCBIfam" id="NF003621">
    <property type="entry name" value="PRK05261.1-6"/>
    <property type="match status" value="1"/>
</dbReference>
<dbReference type="PANTHER" id="PTHR31273">
    <property type="entry name" value="PHOSPHOKETOLASE-RELATED"/>
    <property type="match status" value="1"/>
</dbReference>
<dbReference type="PANTHER" id="PTHR31273:SF0">
    <property type="entry name" value="PHOSPHOKETOLASE-RELATED"/>
    <property type="match status" value="1"/>
</dbReference>
<dbReference type="Pfam" id="PF03894">
    <property type="entry name" value="XFP"/>
    <property type="match status" value="1"/>
</dbReference>
<dbReference type="Pfam" id="PF09363">
    <property type="entry name" value="XFP_C"/>
    <property type="match status" value="1"/>
</dbReference>
<dbReference type="Pfam" id="PF09364">
    <property type="entry name" value="XFP_N"/>
    <property type="match status" value="1"/>
</dbReference>
<dbReference type="PIRSF" id="PIRSF017245">
    <property type="entry name" value="Phosphoketolase"/>
    <property type="match status" value="1"/>
</dbReference>
<dbReference type="SUPFAM" id="SSF52518">
    <property type="entry name" value="Thiamin diphosphate-binding fold (THDP-binding)"/>
    <property type="match status" value="2"/>
</dbReference>
<dbReference type="PROSITE" id="PS60002">
    <property type="entry name" value="PHOSPHOKETOLASE_1"/>
    <property type="match status" value="1"/>
</dbReference>
<dbReference type="PROSITE" id="PS60003">
    <property type="entry name" value="PHOSPHOKETOLASE_2"/>
    <property type="match status" value="1"/>
</dbReference>
<accession>Q2ITA9</accession>